<feature type="chain" id="PRO_0000422575" description="Octaketide synthase 1">
    <location>
        <begin position="1"/>
        <end position="403"/>
    </location>
</feature>
<feature type="active site" evidence="1">
    <location>
        <position position="174"/>
    </location>
</feature>
<feature type="binding site" evidence="1">
    <location>
        <position position="281"/>
    </location>
    <ligand>
        <name>CoA</name>
        <dbReference type="ChEBI" id="CHEBI:57287"/>
    </ligand>
</feature>
<feature type="binding site" evidence="1">
    <location>
        <begin position="318"/>
        <end position="321"/>
    </location>
    <ligand>
        <name>CoA</name>
        <dbReference type="ChEBI" id="CHEBI:57287"/>
    </ligand>
</feature>
<feature type="site" description="Determines the polyketide chain length and product specificity">
    <location>
        <position position="207"/>
    </location>
</feature>
<feature type="mutagenesis site" description="Turns into a heptaketide synthase." evidence="2">
    <original>G</original>
    <variation>A</variation>
    <location>
        <position position="207"/>
    </location>
</feature>
<feature type="mutagenesis site" description="Turns into a pentaketide synthase that mediates production of the pentaketide 2,7-dihydroxy-5-methylchromone." evidence="2">
    <original>G</original>
    <variation>L</variation>
    <variation>F</variation>
    <location>
        <position position="207"/>
    </location>
</feature>
<feature type="mutagenesis site" description="Turns into an unnatural pentaketide synthase." evidence="2">
    <original>G</original>
    <variation>M</variation>
    <location>
        <position position="207"/>
    </location>
</feature>
<feature type="mutagenesis site" description="Turns into a hexaketide synthase." evidence="2">
    <original>G</original>
    <variation>T</variation>
    <location>
        <position position="207"/>
    </location>
</feature>
<feature type="mutagenesis site" description="Turns into an tetraketide synthase." evidence="2">
    <original>G</original>
    <variation>W</variation>
    <location>
        <position position="207"/>
    </location>
</feature>
<feature type="helix" evidence="5">
    <location>
        <begin position="14"/>
        <end position="21"/>
    </location>
</feature>
<feature type="strand" evidence="5">
    <location>
        <begin position="28"/>
        <end position="35"/>
    </location>
</feature>
<feature type="strand" evidence="5">
    <location>
        <begin position="38"/>
        <end position="42"/>
    </location>
</feature>
<feature type="helix" evidence="5">
    <location>
        <begin position="43"/>
        <end position="45"/>
    </location>
</feature>
<feature type="helix" evidence="5">
    <location>
        <begin position="46"/>
        <end position="53"/>
    </location>
</feature>
<feature type="helix" evidence="5">
    <location>
        <begin position="60"/>
        <end position="72"/>
    </location>
</feature>
<feature type="strand" evidence="5">
    <location>
        <begin position="77"/>
        <end position="81"/>
    </location>
</feature>
<feature type="helix" evidence="5">
    <location>
        <begin position="84"/>
        <end position="88"/>
    </location>
</feature>
<feature type="helix" evidence="5">
    <location>
        <begin position="91"/>
        <end position="94"/>
    </location>
</feature>
<feature type="strand" evidence="5">
    <location>
        <begin position="95"/>
        <end position="99"/>
    </location>
</feature>
<feature type="helix" evidence="5">
    <location>
        <begin position="101"/>
        <end position="127"/>
    </location>
</feature>
<feature type="helix" evidence="5">
    <location>
        <begin position="131"/>
        <end position="133"/>
    </location>
</feature>
<feature type="strand" evidence="5">
    <location>
        <begin position="136"/>
        <end position="143"/>
    </location>
</feature>
<feature type="strand" evidence="5">
    <location>
        <begin position="146"/>
        <end position="148"/>
    </location>
</feature>
<feature type="helix" evidence="5">
    <location>
        <begin position="150"/>
        <end position="158"/>
    </location>
</feature>
<feature type="strand" evidence="5">
    <location>
        <begin position="165"/>
        <end position="171"/>
    </location>
</feature>
<feature type="helix" evidence="5">
    <location>
        <begin position="173"/>
        <end position="175"/>
    </location>
</feature>
<feature type="helix" evidence="5">
    <location>
        <begin position="176"/>
        <end position="189"/>
    </location>
</feature>
<feature type="strand" evidence="5">
    <location>
        <begin position="195"/>
        <end position="202"/>
    </location>
</feature>
<feature type="helix" evidence="5">
    <location>
        <begin position="204"/>
        <end position="206"/>
    </location>
</feature>
<feature type="helix" evidence="5">
    <location>
        <begin position="216"/>
        <end position="224"/>
    </location>
</feature>
<feature type="strand" evidence="5">
    <location>
        <begin position="228"/>
        <end position="237"/>
    </location>
</feature>
<feature type="turn" evidence="5">
    <location>
        <begin position="240"/>
        <end position="242"/>
    </location>
</feature>
<feature type="strand" evidence="5">
    <location>
        <begin position="247"/>
        <end position="256"/>
    </location>
</feature>
<feature type="strand" evidence="5">
    <location>
        <begin position="263"/>
        <end position="269"/>
    </location>
</feature>
<feature type="strand" evidence="5">
    <location>
        <begin position="272"/>
        <end position="277"/>
    </location>
</feature>
<feature type="helix" evidence="5">
    <location>
        <begin position="281"/>
        <end position="298"/>
    </location>
</feature>
<feature type="turn" evidence="5">
    <location>
        <begin position="299"/>
        <end position="301"/>
    </location>
</feature>
<feature type="helix" evidence="5">
    <location>
        <begin position="308"/>
        <end position="310"/>
    </location>
</feature>
<feature type="strand" evidence="5">
    <location>
        <begin position="311"/>
        <end position="315"/>
    </location>
</feature>
<feature type="helix" evidence="5">
    <location>
        <begin position="320"/>
        <end position="329"/>
    </location>
</feature>
<feature type="helix" evidence="5">
    <location>
        <begin position="334"/>
        <end position="337"/>
    </location>
</feature>
<feature type="helix" evidence="5">
    <location>
        <begin position="338"/>
        <end position="347"/>
    </location>
</feature>
<feature type="helix" evidence="5">
    <location>
        <begin position="351"/>
        <end position="353"/>
    </location>
</feature>
<feature type="helix" evidence="5">
    <location>
        <begin position="354"/>
        <end position="368"/>
    </location>
</feature>
<feature type="turn" evidence="5">
    <location>
        <begin position="374"/>
        <end position="377"/>
    </location>
</feature>
<feature type="strand" evidence="5">
    <location>
        <begin position="379"/>
        <end position="387"/>
    </location>
</feature>
<feature type="turn" evidence="5">
    <location>
        <begin position="388"/>
        <end position="390"/>
    </location>
</feature>
<feature type="strand" evidence="5">
    <location>
        <begin position="391"/>
        <end position="399"/>
    </location>
</feature>
<reference key="1">
    <citation type="journal article" date="2005" name="J. Am. Chem. Soc.">
        <title>Engineered biosynthesis of plant polyketides: chain length control in an octaketide-producing plant type III polyketide synthase.</title>
        <authorList>
            <person name="Abe I."/>
            <person name="Oguro S."/>
            <person name="Utsumi Y."/>
            <person name="Sano Y."/>
            <person name="Noguchi H."/>
        </authorList>
    </citation>
    <scope>NUCLEOTIDE SEQUENCE [MRNA]</scope>
    <scope>FUNCTION</scope>
    <scope>CATALYTIC ACTIVITY</scope>
    <scope>SUBUNIT</scope>
    <scope>BIOPHYSICOCHEMICAL PROPERTIES</scope>
    <scope>MUTAGENESIS OF GLY-207</scope>
</reference>
<organism>
    <name type="scientific">Aloe arborescens</name>
    <name type="common">Kidachi aloe</name>
    <dbReference type="NCBI Taxonomy" id="45385"/>
    <lineage>
        <taxon>Eukaryota</taxon>
        <taxon>Viridiplantae</taxon>
        <taxon>Streptophyta</taxon>
        <taxon>Embryophyta</taxon>
        <taxon>Tracheophyta</taxon>
        <taxon>Spermatophyta</taxon>
        <taxon>Magnoliopsida</taxon>
        <taxon>Liliopsida</taxon>
        <taxon>Asparagales</taxon>
        <taxon>Asphodelaceae</taxon>
        <taxon>Asphodeloideae</taxon>
        <taxon>Aloe</taxon>
    </lineage>
</organism>
<evidence type="ECO:0000250" key="1"/>
<evidence type="ECO:0000269" key="2">
    <source>
    </source>
</evidence>
<evidence type="ECO:0000305" key="3"/>
<evidence type="ECO:0000305" key="4">
    <source>
    </source>
</evidence>
<evidence type="ECO:0007829" key="5">
    <source>
        <dbReference type="PDB" id="7DTQ"/>
    </source>
</evidence>
<accession>Q3L7F5</accession>
<proteinExistence type="evidence at protein level"/>
<protein>
    <recommendedName>
        <fullName>Octaketide synthase 1</fullName>
        <shortName>OKS</shortName>
        <ecNumber>2.3.1.-</ecNumber>
    </recommendedName>
</protein>
<keyword id="KW-0002">3D-structure</keyword>
<keyword id="KW-0012">Acyltransferase</keyword>
<keyword id="KW-0284">Flavonoid biosynthesis</keyword>
<keyword id="KW-0808">Transferase</keyword>
<dbReference type="EC" id="2.3.1.-"/>
<dbReference type="EMBL" id="AY567707">
    <property type="protein sequence ID" value="AAT48709.1"/>
    <property type="molecule type" value="mRNA"/>
</dbReference>
<dbReference type="PDB" id="7DTQ">
    <property type="method" value="X-ray"/>
    <property type="resolution" value="1.75 A"/>
    <property type="chains" value="A/B/C/D=1-403"/>
</dbReference>
<dbReference type="PDBsum" id="7DTQ"/>
<dbReference type="SMR" id="Q3L7F5"/>
<dbReference type="BioCyc" id="MetaCyc:MONOMER-15013"/>
<dbReference type="BRENDA" id="2.3.1.B25">
    <property type="organism ID" value="263"/>
</dbReference>
<dbReference type="UniPathway" id="UPA00154"/>
<dbReference type="GO" id="GO:0016747">
    <property type="term" value="F:acyltransferase activity, transferring groups other than amino-acyl groups"/>
    <property type="evidence" value="ECO:0000314"/>
    <property type="project" value="UniProtKB"/>
</dbReference>
<dbReference type="GO" id="GO:0042803">
    <property type="term" value="F:protein homodimerization activity"/>
    <property type="evidence" value="ECO:0000314"/>
    <property type="project" value="UniProtKB"/>
</dbReference>
<dbReference type="GO" id="GO:0009813">
    <property type="term" value="P:flavonoid biosynthetic process"/>
    <property type="evidence" value="ECO:0000314"/>
    <property type="project" value="UniProtKB"/>
</dbReference>
<dbReference type="GO" id="GO:0030639">
    <property type="term" value="P:polyketide biosynthetic process"/>
    <property type="evidence" value="ECO:0007669"/>
    <property type="project" value="TreeGrafter"/>
</dbReference>
<dbReference type="CDD" id="cd00831">
    <property type="entry name" value="CHS_like"/>
    <property type="match status" value="1"/>
</dbReference>
<dbReference type="FunFam" id="3.40.47.10:FF:000014">
    <property type="entry name" value="Chalcone synthase 1"/>
    <property type="match status" value="1"/>
</dbReference>
<dbReference type="FunFam" id="3.40.47.10:FF:000025">
    <property type="entry name" value="Chalcone synthase 2"/>
    <property type="match status" value="1"/>
</dbReference>
<dbReference type="Gene3D" id="3.40.47.10">
    <property type="match status" value="2"/>
</dbReference>
<dbReference type="InterPro" id="IPR012328">
    <property type="entry name" value="Chalcone/stilbene_synt_C"/>
</dbReference>
<dbReference type="InterPro" id="IPR001099">
    <property type="entry name" value="Chalcone/stilbene_synt_N"/>
</dbReference>
<dbReference type="InterPro" id="IPR011141">
    <property type="entry name" value="Polyketide_synthase_type-III"/>
</dbReference>
<dbReference type="InterPro" id="IPR016039">
    <property type="entry name" value="Thiolase-like"/>
</dbReference>
<dbReference type="PANTHER" id="PTHR11877:SF80">
    <property type="entry name" value="CHALCONE SYNTHASE 1"/>
    <property type="match status" value="1"/>
</dbReference>
<dbReference type="PANTHER" id="PTHR11877">
    <property type="entry name" value="HYDROXYMETHYLGLUTARYL-COA SYNTHASE"/>
    <property type="match status" value="1"/>
</dbReference>
<dbReference type="Pfam" id="PF02797">
    <property type="entry name" value="Chal_sti_synt_C"/>
    <property type="match status" value="1"/>
</dbReference>
<dbReference type="Pfam" id="PF00195">
    <property type="entry name" value="Chal_sti_synt_N"/>
    <property type="match status" value="1"/>
</dbReference>
<dbReference type="PIRSF" id="PIRSF000451">
    <property type="entry name" value="PKS_III"/>
    <property type="match status" value="1"/>
</dbReference>
<dbReference type="SUPFAM" id="SSF53901">
    <property type="entry name" value="Thiolase-like"/>
    <property type="match status" value="2"/>
</dbReference>
<comment type="function">
    <text evidence="2">Catalyzes the iterative condensations of 8 molecules of malonyl-CoA to produce aromatic octaketides, SEK4 and SEK4b, the products of the minimal polyketide synthase for the benzoisochromanequinone actinorhodin. May be involved in the biosynthesis of the octaketide barbaloin.</text>
</comment>
<comment type="biophysicochemical properties">
    <kinetics>
        <KM evidence="2">95 uM for malonyl-CoA</KM>
        <text>kcat is 0.094 min(-1).</text>
    </kinetics>
    <phDependence>
        <text evidence="2">Optimum pH is 7.5.</text>
    </phDependence>
</comment>
<comment type="pathway">
    <text>Secondary metabolite biosynthesis; flavonoid biosynthesis.</text>
</comment>
<comment type="subunit">
    <text evidence="4">Homodimer.</text>
</comment>
<comment type="miscellaneous">
    <text>A.arborescens is a medicinal plant rich in aromatic polyketides, such as pharmaceutically important aloenin (hexaketide), aloesin (heptaketide) and barbaloin (octaketide).</text>
</comment>
<comment type="similarity">
    <text evidence="3">Belongs to the thiolase-like superfamily. Chalcone/stilbene synthases family.</text>
</comment>
<sequence length="403" mass="44570">MSSLSNASHLMEDVQGIRKAQRADGTATVMAIGTAHPPHIFPQDTYADFYFRATNSEHKVELKKKFDRICKKTMIGKRYFNYDEEFLKKYPNITSFDEPSLNDRQDICVPGVPALGAEAAVKAIAEWGRPKSEITHLVFCTSCGVDMPSADFQCAKLLGLRTNVNKYCVYMQGCYAGGTVMRYAKDLAENNRGARVLVVCAELTIIGLRGPNESHLDNAIGNSLFGDGAAALIVGSDPIIGVEKPMFEIVCAKQTVIPNSEDVIHLHMREAGLMFYMSKDSPETISNNVEACLVDVFKSVGMTPPEDWNSLFWIPHPGGRAILDQVEAKLKLRPEKFRATRTVLWDCGNMVSACVLYILDEMRRKSADEGLETYGEGLEWGVLLGFGPGMTVETILLHSLPLM</sequence>
<name>OKS_ALOAR</name>